<gene>
    <name evidence="2" type="primary">ddost</name>
    <name type="ORF">zgc:66068</name>
</gene>
<feature type="signal peptide" evidence="4">
    <location>
        <begin position="1"/>
        <end position="28"/>
    </location>
</feature>
<feature type="chain" id="PRO_0000357448" description="Dolichyl-diphosphooligosaccharide--protein glycosyltransferase 48 kDa subunit">
    <location>
        <begin position="29"/>
        <end position="441"/>
    </location>
</feature>
<feature type="topological domain" description="Lumenal" evidence="4">
    <location>
        <begin position="29"/>
        <end position="410"/>
    </location>
</feature>
<feature type="transmembrane region" description="Helical" evidence="4">
    <location>
        <begin position="411"/>
        <end position="431"/>
    </location>
</feature>
<feature type="topological domain" description="Cytoplasmic" evidence="4">
    <location>
        <begin position="432"/>
        <end position="441"/>
    </location>
</feature>
<feature type="sequence conflict" description="In Ref. 1; AAH56559." evidence="5" ref="1">
    <original>A</original>
    <variation>T</variation>
    <location>
        <position position="2"/>
    </location>
</feature>
<feature type="sequence conflict" description="In Ref. 1; AAH56559." evidence="5" ref="1">
    <original>A</original>
    <variation>P</variation>
    <location>
        <position position="13"/>
    </location>
</feature>
<feature type="sequence conflict" description="In Ref. 1; AAH56559." evidence="5" ref="1">
    <original>I</original>
    <variation>V</variation>
    <location>
        <position position="16"/>
    </location>
</feature>
<feature type="sequence conflict" description="In Ref. 1; AAH66475." evidence="5" ref="1">
    <original>I</original>
    <variation>L</variation>
    <location>
        <position position="72"/>
    </location>
</feature>
<reference key="1">
    <citation type="submission" date="2004-02" db="EMBL/GenBank/DDBJ databases">
        <authorList>
            <consortium name="NIH - Zebrafish Gene Collection (ZGC) project"/>
        </authorList>
    </citation>
    <scope>NUCLEOTIDE SEQUENCE [LARGE SCALE MRNA]</scope>
    <source>
        <tissue>Kidney</tissue>
    </source>
</reference>
<organism>
    <name type="scientific">Danio rerio</name>
    <name type="common">Zebrafish</name>
    <name type="synonym">Brachydanio rerio</name>
    <dbReference type="NCBI Taxonomy" id="7955"/>
    <lineage>
        <taxon>Eukaryota</taxon>
        <taxon>Metazoa</taxon>
        <taxon>Chordata</taxon>
        <taxon>Craniata</taxon>
        <taxon>Vertebrata</taxon>
        <taxon>Euteleostomi</taxon>
        <taxon>Actinopterygii</taxon>
        <taxon>Neopterygii</taxon>
        <taxon>Teleostei</taxon>
        <taxon>Ostariophysi</taxon>
        <taxon>Cypriniformes</taxon>
        <taxon>Danionidae</taxon>
        <taxon>Danioninae</taxon>
        <taxon>Danio</taxon>
    </lineage>
</organism>
<protein>
    <recommendedName>
        <fullName evidence="2">Dolichyl-diphosphooligosaccharide--protein glycosyltransferase 48 kDa subunit</fullName>
        <shortName>DDOST 48 kDa subunit</shortName>
        <shortName>Oligosaccharyl transferase 48 kDa subunit</shortName>
    </recommendedName>
</protein>
<keyword id="KW-0256">Endoplasmic reticulum</keyword>
<keyword id="KW-0472">Membrane</keyword>
<keyword id="KW-1185">Reference proteome</keyword>
<keyword id="KW-0732">Signal</keyword>
<keyword id="KW-0812">Transmembrane</keyword>
<keyword id="KW-1133">Transmembrane helix</keyword>
<proteinExistence type="evidence at transcript level"/>
<accession>Q6NYS8</accession>
<accession>Q6PHG6</accession>
<dbReference type="EMBL" id="BC056559">
    <property type="protein sequence ID" value="AAH56559.1"/>
    <property type="molecule type" value="mRNA"/>
</dbReference>
<dbReference type="EMBL" id="BC066475">
    <property type="protein sequence ID" value="AAH66475.1"/>
    <property type="molecule type" value="mRNA"/>
</dbReference>
<dbReference type="RefSeq" id="NP_998258.1">
    <property type="nucleotide sequence ID" value="NM_213093.1"/>
</dbReference>
<dbReference type="SMR" id="Q6NYS8"/>
<dbReference type="FunCoup" id="Q6NYS8">
    <property type="interactions" value="3209"/>
</dbReference>
<dbReference type="STRING" id="7955.ENSDARP00000105892"/>
<dbReference type="PaxDb" id="7955-ENSDARP00000105892"/>
<dbReference type="GeneID" id="406408"/>
<dbReference type="KEGG" id="dre:406408"/>
<dbReference type="AGR" id="ZFIN:ZDB-GENE-040426-2147"/>
<dbReference type="CTD" id="1650"/>
<dbReference type="ZFIN" id="ZDB-GENE-040426-2147">
    <property type="gene designation" value="ddost"/>
</dbReference>
<dbReference type="eggNOG" id="KOG2754">
    <property type="taxonomic scope" value="Eukaryota"/>
</dbReference>
<dbReference type="InParanoid" id="Q6NYS8"/>
<dbReference type="OrthoDB" id="29105at2759"/>
<dbReference type="PhylomeDB" id="Q6NYS8"/>
<dbReference type="Reactome" id="R-DRE-6798695">
    <property type="pathway name" value="Neutrophil degranulation"/>
</dbReference>
<dbReference type="UniPathway" id="UPA00378"/>
<dbReference type="PRO" id="PR:Q6NYS8"/>
<dbReference type="Proteomes" id="UP000000437">
    <property type="component" value="Chromosome 23"/>
</dbReference>
<dbReference type="GO" id="GO:0008250">
    <property type="term" value="C:oligosaccharyltransferase complex"/>
    <property type="evidence" value="ECO:0000318"/>
    <property type="project" value="GO_Central"/>
</dbReference>
<dbReference type="GO" id="GO:0018279">
    <property type="term" value="P:protein N-linked glycosylation via asparagine"/>
    <property type="evidence" value="ECO:0000318"/>
    <property type="project" value="GO_Central"/>
</dbReference>
<dbReference type="InterPro" id="IPR005013">
    <property type="entry name" value="DDOST_48_kDa_subunit"/>
</dbReference>
<dbReference type="InterPro" id="IPR055459">
    <property type="entry name" value="OST48_MD"/>
</dbReference>
<dbReference type="InterPro" id="IPR055457">
    <property type="entry name" value="OST48_N"/>
</dbReference>
<dbReference type="PANTHER" id="PTHR10830">
    <property type="entry name" value="DOLICHYL-DIPHOSPHOOLIGOSACCHARIDE--PROTEIN GLYCOSYLTRANSFERASE 48 KDA SUBUNIT"/>
    <property type="match status" value="1"/>
</dbReference>
<dbReference type="PANTHER" id="PTHR10830:SF0">
    <property type="entry name" value="DOLICHYL-DIPHOSPHOOLIGOSACCHARIDE--PROTEIN GLYCOSYLTRANSFERASE 48 KDA SUBUNIT"/>
    <property type="match status" value="1"/>
</dbReference>
<dbReference type="Pfam" id="PF23358">
    <property type="entry name" value="OST48_MD"/>
    <property type="match status" value="1"/>
</dbReference>
<dbReference type="Pfam" id="PF03345">
    <property type="entry name" value="OST48_N"/>
    <property type="match status" value="1"/>
</dbReference>
<name>OST48_DANRE</name>
<evidence type="ECO:0000250" key="1"/>
<evidence type="ECO:0000250" key="2">
    <source>
        <dbReference type="UniProtKB" id="P39656"/>
    </source>
</evidence>
<evidence type="ECO:0000250" key="3">
    <source>
        <dbReference type="UniProtKB" id="Q05052"/>
    </source>
</evidence>
<evidence type="ECO:0000255" key="4"/>
<evidence type="ECO:0000305" key="5"/>
<sequence length="441" mass="48534">MATALSGGFSKNALFILSAALMLQAVLGDGKTLVLLDNPNIRDTHSIFFRSLADRGFDLTFKTADDPGLSLIKYGQFLYDHLILFSPSVEDFGGNINVETITAFIDGGGNVLVAASSDIGDPLRELGSECGIEFDEEKTAVIDHHNYDISDPGEHTLIVADPENLLKAPTIVGKPTDKPVLFKGVGMVADPDNPLVLDILTGSSTSYSYFPDRPITQYPHAVGKNTLLIAGLQARNNARVVFSGSLHFFSDAFFNSAVQKAATGSKRYEQTGNQDLAEALSRWVFKEAGVLRVGDVTHHPVGESTPPAAYTVTDLVEYGIVIEMLSGGKWVPFDGDDIQLEFVRIDPFVRTYLKKNGGKYSVQFKLPDVYGVFQFKVDYNRLGYTHLYSSTQVSVRPLQHTQYERFIPSAFPYYASAFSMMAGLFVFSVVFLHMREKEKSD</sequence>
<comment type="function">
    <text evidence="2 3">Subunit of the oligosaccharyl transferase (OST) complex that catalyzes the initial transfer of a defined glycan (Glc(3)Man(9)GlcNAc(2) in eukaryotes) from the lipid carrier dolichol-pyrophosphate to an asparagine residue within an Asn-X-Ser/Thr consensus motif in nascent polypeptide chains, the first step in protein N-glycosylation (By similarity). N-glycosylation occurs cotranslationally and the complex associates with the Sec61 complex at the channel-forming translocon complex that mediates protein translocation across the endoplasmic reticulum (ER). All subunits are required for a maximal enzyme activity (By similarity). Required for the assembly of both SST3A- and SS3B-containing OST complexes (By similarity).</text>
</comment>
<comment type="pathway">
    <text evidence="2">Protein modification; protein glycosylation.</text>
</comment>
<comment type="subunit">
    <text evidence="3">Component of the oligosaccharyltransferase (OST) complex.</text>
</comment>
<comment type="subcellular location">
    <subcellularLocation>
        <location evidence="1">Endoplasmic reticulum membrane</location>
        <topology evidence="1">Single-pass type I membrane protein</topology>
    </subcellularLocation>
</comment>
<comment type="similarity">
    <text evidence="5">Belongs to the DDOST 48 kDa subunit family.</text>
</comment>